<keyword id="KW-0032">Aminotransferase</keyword>
<keyword id="KW-1185">Reference proteome</keyword>
<keyword id="KW-0808">Transferase</keyword>
<comment type="function">
    <text evidence="1">The glycine cleavage system catalyzes the degradation of glycine.</text>
</comment>
<comment type="catalytic activity">
    <reaction evidence="1">
        <text>N(6)-[(R)-S(8)-aminomethyldihydrolipoyl]-L-lysyl-[protein] + (6S)-5,6,7,8-tetrahydrofolate = N(6)-[(R)-dihydrolipoyl]-L-lysyl-[protein] + (6R)-5,10-methylene-5,6,7,8-tetrahydrofolate + NH4(+)</text>
        <dbReference type="Rhea" id="RHEA:16945"/>
        <dbReference type="Rhea" id="RHEA-COMP:10475"/>
        <dbReference type="Rhea" id="RHEA-COMP:10492"/>
        <dbReference type="ChEBI" id="CHEBI:15636"/>
        <dbReference type="ChEBI" id="CHEBI:28938"/>
        <dbReference type="ChEBI" id="CHEBI:57453"/>
        <dbReference type="ChEBI" id="CHEBI:83100"/>
        <dbReference type="ChEBI" id="CHEBI:83143"/>
        <dbReference type="EC" id="2.1.2.10"/>
    </reaction>
</comment>
<comment type="subunit">
    <text evidence="1">The glycine cleavage system is composed of four proteins: P, T, L and H.</text>
</comment>
<comment type="similarity">
    <text evidence="1">Belongs to the GcvT family.</text>
</comment>
<protein>
    <recommendedName>
        <fullName evidence="1">Aminomethyltransferase</fullName>
        <ecNumber evidence="1">2.1.2.10</ecNumber>
    </recommendedName>
    <alternativeName>
        <fullName evidence="1">Glycine cleavage system T protein</fullName>
    </alternativeName>
</protein>
<dbReference type="EC" id="2.1.2.10" evidence="1"/>
<dbReference type="EMBL" id="AM295250">
    <property type="protein sequence ID" value="CAL28069.1"/>
    <property type="molecule type" value="Genomic_DNA"/>
</dbReference>
<dbReference type="RefSeq" id="WP_015900410.1">
    <property type="nucleotide sequence ID" value="NC_012121.1"/>
</dbReference>
<dbReference type="SMR" id="B9DNN7"/>
<dbReference type="GeneID" id="93793585"/>
<dbReference type="KEGG" id="sca:SCA_1161"/>
<dbReference type="eggNOG" id="COG0404">
    <property type="taxonomic scope" value="Bacteria"/>
</dbReference>
<dbReference type="HOGENOM" id="CLU_007884_10_2_9"/>
<dbReference type="OrthoDB" id="9774591at2"/>
<dbReference type="BioCyc" id="SCAR396513:SCA_RS05810-MONOMER"/>
<dbReference type="Proteomes" id="UP000000444">
    <property type="component" value="Chromosome"/>
</dbReference>
<dbReference type="GO" id="GO:0005829">
    <property type="term" value="C:cytosol"/>
    <property type="evidence" value="ECO:0007669"/>
    <property type="project" value="TreeGrafter"/>
</dbReference>
<dbReference type="GO" id="GO:0005960">
    <property type="term" value="C:glycine cleavage complex"/>
    <property type="evidence" value="ECO:0007669"/>
    <property type="project" value="InterPro"/>
</dbReference>
<dbReference type="GO" id="GO:0004047">
    <property type="term" value="F:aminomethyltransferase activity"/>
    <property type="evidence" value="ECO:0007669"/>
    <property type="project" value="UniProtKB-UniRule"/>
</dbReference>
<dbReference type="GO" id="GO:0008483">
    <property type="term" value="F:transaminase activity"/>
    <property type="evidence" value="ECO:0007669"/>
    <property type="project" value="UniProtKB-KW"/>
</dbReference>
<dbReference type="GO" id="GO:0019464">
    <property type="term" value="P:glycine decarboxylation via glycine cleavage system"/>
    <property type="evidence" value="ECO:0007669"/>
    <property type="project" value="UniProtKB-UniRule"/>
</dbReference>
<dbReference type="FunFam" id="3.30.70.1400:FF:000001">
    <property type="entry name" value="Aminomethyltransferase"/>
    <property type="match status" value="1"/>
</dbReference>
<dbReference type="FunFam" id="4.10.1250.10:FF:000001">
    <property type="entry name" value="Aminomethyltransferase"/>
    <property type="match status" value="1"/>
</dbReference>
<dbReference type="Gene3D" id="2.40.30.110">
    <property type="entry name" value="Aminomethyltransferase beta-barrel domains"/>
    <property type="match status" value="1"/>
</dbReference>
<dbReference type="Gene3D" id="3.30.70.1400">
    <property type="entry name" value="Aminomethyltransferase beta-barrel domains"/>
    <property type="match status" value="1"/>
</dbReference>
<dbReference type="Gene3D" id="4.10.1250.10">
    <property type="entry name" value="Aminomethyltransferase fragment"/>
    <property type="match status" value="1"/>
</dbReference>
<dbReference type="Gene3D" id="3.30.1360.120">
    <property type="entry name" value="Probable tRNA modification gtpase trme, domain 1"/>
    <property type="match status" value="1"/>
</dbReference>
<dbReference type="HAMAP" id="MF_00259">
    <property type="entry name" value="GcvT"/>
    <property type="match status" value="1"/>
</dbReference>
<dbReference type="InterPro" id="IPR006223">
    <property type="entry name" value="GCS_T"/>
</dbReference>
<dbReference type="InterPro" id="IPR022903">
    <property type="entry name" value="GCS_T_bac"/>
</dbReference>
<dbReference type="InterPro" id="IPR013977">
    <property type="entry name" value="GCST_C"/>
</dbReference>
<dbReference type="InterPro" id="IPR006222">
    <property type="entry name" value="GCV_T_N"/>
</dbReference>
<dbReference type="InterPro" id="IPR028896">
    <property type="entry name" value="GcvT/YgfZ/DmdA"/>
</dbReference>
<dbReference type="InterPro" id="IPR029043">
    <property type="entry name" value="GcvT/YgfZ_C"/>
</dbReference>
<dbReference type="InterPro" id="IPR027266">
    <property type="entry name" value="TrmE/GcvT_dom1"/>
</dbReference>
<dbReference type="NCBIfam" id="TIGR00528">
    <property type="entry name" value="gcvT"/>
    <property type="match status" value="1"/>
</dbReference>
<dbReference type="NCBIfam" id="NF001567">
    <property type="entry name" value="PRK00389.1"/>
    <property type="match status" value="1"/>
</dbReference>
<dbReference type="PANTHER" id="PTHR43757">
    <property type="entry name" value="AMINOMETHYLTRANSFERASE"/>
    <property type="match status" value="1"/>
</dbReference>
<dbReference type="PANTHER" id="PTHR43757:SF2">
    <property type="entry name" value="AMINOMETHYLTRANSFERASE, MITOCHONDRIAL"/>
    <property type="match status" value="1"/>
</dbReference>
<dbReference type="Pfam" id="PF01571">
    <property type="entry name" value="GCV_T"/>
    <property type="match status" value="1"/>
</dbReference>
<dbReference type="Pfam" id="PF08669">
    <property type="entry name" value="GCV_T_C"/>
    <property type="match status" value="1"/>
</dbReference>
<dbReference type="PIRSF" id="PIRSF006487">
    <property type="entry name" value="GcvT"/>
    <property type="match status" value="1"/>
</dbReference>
<dbReference type="SUPFAM" id="SSF101790">
    <property type="entry name" value="Aminomethyltransferase beta-barrel domain"/>
    <property type="match status" value="1"/>
</dbReference>
<dbReference type="SUPFAM" id="SSF103025">
    <property type="entry name" value="Folate-binding domain"/>
    <property type="match status" value="1"/>
</dbReference>
<feature type="chain" id="PRO_1000125646" description="Aminomethyltransferase">
    <location>
        <begin position="1"/>
        <end position="364"/>
    </location>
</feature>
<accession>B9DNN7</accession>
<name>GCST_STACT</name>
<proteinExistence type="inferred from homology"/>
<evidence type="ECO:0000255" key="1">
    <source>
        <dbReference type="HAMAP-Rule" id="MF_00259"/>
    </source>
</evidence>
<sequence length="364" mass="40331">MSNDLKKTPLYDRFVESNAKIVEFGGWAMPVQFSSIKEEHNAVREVMGIFDVSHMGEVLIEGKDASDFIQYILSNDTDQLTDNKAQYTALCNDKGGIIDDLITYKLDNQKYLLVVNAANTEKDYNWINSHSENFDVKVENVSDQYGQLAVQGPEARDYVGSLVDVDVSEMKPFDFKKDVTIFGKNIILSQSGYTGEDGFEIYCNSDDVVDIWDGLLENENLVPAGLGARDTLRLEAGLPLHGQDLSEDITPYEGGIAFAAKPLIEADFIGKEVLKEQKENGSAERTIGLEMLDKGIPRTGYDVLDLDGNKIGVVTSGTQSPATGKGIALAIINRDEFEMGREVLVQIRKRQVKAKIVKKNQISK</sequence>
<organism>
    <name type="scientific">Staphylococcus carnosus (strain TM300)</name>
    <dbReference type="NCBI Taxonomy" id="396513"/>
    <lineage>
        <taxon>Bacteria</taxon>
        <taxon>Bacillati</taxon>
        <taxon>Bacillota</taxon>
        <taxon>Bacilli</taxon>
        <taxon>Bacillales</taxon>
        <taxon>Staphylococcaceae</taxon>
        <taxon>Staphylococcus</taxon>
    </lineage>
</organism>
<reference key="1">
    <citation type="journal article" date="2009" name="Appl. Environ. Microbiol.">
        <title>Genome analysis of the meat starter culture bacterium Staphylococcus carnosus TM300.</title>
        <authorList>
            <person name="Rosenstein R."/>
            <person name="Nerz C."/>
            <person name="Biswas L."/>
            <person name="Resch A."/>
            <person name="Raddatz G."/>
            <person name="Schuster S.C."/>
            <person name="Goetz F."/>
        </authorList>
    </citation>
    <scope>NUCLEOTIDE SEQUENCE [LARGE SCALE GENOMIC DNA]</scope>
    <source>
        <strain>TM300</strain>
    </source>
</reference>
<gene>
    <name evidence="1" type="primary">gcvT</name>
    <name type="ordered locus">Sca_1161</name>
</gene>